<dbReference type="EMBL" id="M27262">
    <property type="protein sequence ID" value="AAA47260.1"/>
    <property type="molecule type" value="Genomic_RNA"/>
</dbReference>
<dbReference type="EMBL" id="AF174384">
    <property type="protein sequence ID" value="AAF13171.1"/>
    <property type="molecule type" value="Genomic_RNA"/>
</dbReference>
<dbReference type="EMBL" id="EF494440">
    <property type="protein sequence ID" value="ABP48918.1"/>
    <property type="molecule type" value="Genomic_RNA"/>
</dbReference>
<dbReference type="PIR" id="B30179">
    <property type="entry name" value="MNXR3D"/>
</dbReference>
<dbReference type="SMR" id="P12419"/>
<dbReference type="Proteomes" id="UP000006373">
    <property type="component" value="Genome"/>
</dbReference>
<dbReference type="Proteomes" id="UP000165799">
    <property type="component" value="Genome"/>
</dbReference>
<dbReference type="GO" id="GO:0030430">
    <property type="term" value="C:host cell cytoplasm"/>
    <property type="evidence" value="ECO:0007669"/>
    <property type="project" value="UniProtKB-SubCell"/>
</dbReference>
<dbReference type="GO" id="GO:0003723">
    <property type="term" value="F:RNA binding"/>
    <property type="evidence" value="ECO:0007669"/>
    <property type="project" value="UniProtKB-KW"/>
</dbReference>
<feature type="chain" id="PRO_0000222748" description="Protein mu-NS">
    <location>
        <begin position="1"/>
        <end position="721"/>
    </location>
</feature>
<feature type="region of interest" description="RNA-binding" evidence="6">
    <location>
        <begin position="1"/>
        <end position="38"/>
    </location>
</feature>
<feature type="region of interest" description="Interaction with sigma-NS" evidence="2">
    <location>
        <begin position="1"/>
        <end position="13"/>
    </location>
</feature>
<feature type="region of interest" description="Interaction with mu-2" evidence="2">
    <location>
        <begin position="14"/>
        <end position="40"/>
    </location>
</feature>
<feature type="region of interest" description="Involved in the formation of factory-like inclusions" evidence="2">
    <location>
        <begin position="471"/>
        <end position="721"/>
    </location>
</feature>
<feature type="coiled-coil region" evidence="3">
    <location>
        <begin position="522"/>
        <end position="559"/>
    </location>
</feature>
<feature type="coiled-coil region" evidence="3">
    <location>
        <begin position="628"/>
        <end position="684"/>
    </location>
</feature>
<feature type="site" description="Important for the formation of viral factories" evidence="2">
    <location>
        <position position="570"/>
    </location>
</feature>
<feature type="site" description="Important for the formation of viral factories" evidence="2">
    <location>
        <position position="572"/>
    </location>
</feature>
<feature type="splice variant" id="VSP_034862" description="In isoform mu-NSC." evidence="7">
    <location>
        <begin position="1"/>
        <end position="40"/>
    </location>
</feature>
<feature type="sequence conflict" description="In Ref. 1; AAA47260." evidence="7" ref="1">
    <original>T</original>
    <variation>I</variation>
    <location>
        <position position="49"/>
    </location>
</feature>
<feature type="sequence conflict" description="In Ref. 1; AAA47260." evidence="7" ref="1">
    <location>
        <position position="127"/>
    </location>
</feature>
<feature type="sequence conflict" description="In Ref. 4; ABP48918." evidence="7" ref="4">
    <original>E</original>
    <variation>K</variation>
    <location>
        <position position="180"/>
    </location>
</feature>
<feature type="sequence conflict" description="In Ref. 4; ABP48918." evidence="7" ref="4">
    <original>LV</original>
    <variation>QL</variation>
    <location>
        <begin position="201"/>
        <end position="202"/>
    </location>
</feature>
<feature type="sequence conflict" description="In Ref. 1; AAA47260." evidence="7" ref="1">
    <original>L</original>
    <variation>H</variation>
    <location>
        <position position="201"/>
    </location>
</feature>
<feature type="sequence conflict" description="In Ref. 1; AAA47260." evidence="7" ref="1">
    <original>D</original>
    <variation>H</variation>
    <location>
        <position position="274"/>
    </location>
</feature>
<feature type="sequence conflict" description="In Ref. 1; AAA47260." evidence="7" ref="1">
    <original>L</original>
    <variation>R</variation>
    <location>
        <position position="302"/>
    </location>
</feature>
<feature type="sequence conflict" description="In Ref. 1; AAA47260." evidence="7" ref="1">
    <original>T</original>
    <variation>N</variation>
    <location>
        <position position="429"/>
    </location>
</feature>
<feature type="sequence conflict" description="In Ref. 1; AAA47260." evidence="7" ref="1">
    <location>
        <position position="587"/>
    </location>
</feature>
<feature type="sequence conflict" description="In Ref. 4; ABP48918." evidence="7" ref="4">
    <original>VDD</original>
    <variation>ADG</variation>
    <location>
        <begin position="705"/>
        <end position="707"/>
    </location>
</feature>
<name>MUNS_REOVD</name>
<organism>
    <name type="scientific">Reovirus type 3 (strain Dearing)</name>
    <name type="common">T3D</name>
    <name type="synonym">Mammalian orthoreovirus 3</name>
    <dbReference type="NCBI Taxonomy" id="10886"/>
    <lineage>
        <taxon>Viruses</taxon>
        <taxon>Riboviria</taxon>
        <taxon>Orthornavirae</taxon>
        <taxon>Duplornaviricota</taxon>
        <taxon>Resentoviricetes</taxon>
        <taxon>Reovirales</taxon>
        <taxon>Spinareoviridae</taxon>
        <taxon>Orthoreovirus</taxon>
        <taxon>Mammalian orthoreovirus</taxon>
    </lineage>
</organism>
<evidence type="ECO:0000250" key="1">
    <source>
        <dbReference type="UniProtKB" id="Q9PY82"/>
    </source>
</evidence>
<evidence type="ECO:0000250" key="2">
    <source>
        <dbReference type="UniProtKB" id="Q9PY83"/>
    </source>
</evidence>
<evidence type="ECO:0000255" key="3"/>
<evidence type="ECO:0000269" key="4">
    <source>
    </source>
</evidence>
<evidence type="ECO:0000269" key="5">
    <source>
    </source>
</evidence>
<evidence type="ECO:0000269" key="6">
    <source>
    </source>
</evidence>
<evidence type="ECO:0000305" key="7"/>
<keyword id="KW-0024">Alternative initiation</keyword>
<keyword id="KW-0175">Coiled coil</keyword>
<keyword id="KW-1035">Host cytoplasm</keyword>
<keyword id="KW-0694">RNA-binding</keyword>
<comment type="function">
    <text evidence="2 4 6">Non-structural protein implicated with protein sigma-NS in forming the matrix of viral factories, which are large inclusions in the host cytoplasm where replication intermediates are assembled and viral RNA replication takes place (PubMed:12719587). Together with mu-2, recruits the other core proteins to these factories (By similarity). Binds RNA and recruits viral mRNAs to sites of viral replication (PubMed:34225484).</text>
</comment>
<comment type="subunit">
    <text evidence="2 4 5">Interacts with mu-2 (By similarity). Interacts with sigma-NS; in viral factories (PubMed:12719587, PubMed:28794026). Interacts with the inner capsid proteins lambda-1 and sigma-2, and outer capsid protein lambda-2; in viral factories (By similarity).</text>
</comment>
<comment type="subcellular location">
    <subcellularLocation>
        <location evidence="4 5">Host cytoplasm</location>
    </subcellularLocation>
    <text evidence="1 4 5">Localizes to the viral factories formed by mu-NS and sigma-NS (PubMed:12719587, PubMed:28794026). Localizes to the host stress granules (By similarity).</text>
</comment>
<comment type="alternative products">
    <event type="alternative initiation"/>
    <isoform>
        <id>P12419-1</id>
        <name>mu-NS</name>
        <sequence type="displayed"/>
    </isoform>
    <isoform>
        <id>P12419-2</id>
        <name>mu-NSC</name>
        <sequence type="described" ref="VSP_034862"/>
    </isoform>
</comment>
<comment type="domain">
    <text evidence="2">The C-terminus is involved in the formation of factory-like inclusions.</text>
</comment>
<comment type="PTM">
    <text>The N-terminus is blocked.</text>
</comment>
<comment type="miscellaneous">
    <molecule>Isoform mu-NSC</molecule>
    <text evidence="7">It is unsure whether Met-41 is the initiator.</text>
</comment>
<comment type="similarity">
    <text evidence="7">Belongs to the orthoreovirus mu-NS protein family.</text>
</comment>
<reference key="1">
    <citation type="journal article" date="1989" name="Virology">
        <title>The sequences of reovirus serotype 3 genome segments M1 and M3 encoding the minor protein mu 2 and the major nonstructural protein mu NS, respectively.</title>
        <authorList>
            <person name="Wiener J.R."/>
            <person name="Bartlett J.A."/>
            <person name="Joklik W.K."/>
        </authorList>
    </citation>
    <scope>NUCLEOTIDE SEQUENCE [GENOMIC RNA]</scope>
    <scope>ALTERNATIVE INITIATION</scope>
</reference>
<reference key="2">
    <citation type="journal article" date="1999" name="Virology">
        <title>Mammalian reovirus M3 gene sequences and conservation of coiled-coil motifs near the carboxyl terminus of the microNS protein.</title>
        <authorList>
            <person name="McCutcheon A.M."/>
            <person name="Broering T.J."/>
            <person name="Nibert M.L."/>
        </authorList>
    </citation>
    <scope>NUCLEOTIDE SEQUENCE [GENOMIC RNA]</scope>
    <scope>ALTERNATIVE INITIATION</scope>
</reference>
<reference key="3">
    <citation type="journal article" date="2003" name="J. Virol.">
        <title>Reovirus sigma NS and mu NS proteins form cytoplasmic inclusion structures in the absence of viral infection.</title>
        <authorList>
            <person name="Becker M.M."/>
            <person name="Peters T.R."/>
            <person name="Dermody T.S."/>
        </authorList>
    </citation>
    <scope>FUNCTION</scope>
    <scope>SUBCELLULAR LOCATION</scope>
    <scope>INTERACTION WITH PROTEIN SIGMA-NS</scope>
</reference>
<reference key="4">
    <citation type="journal article" date="2007" name="Cell Host Microbe">
        <title>A plasmid-based reverse genetics system for animal double-stranded RNA viruses.</title>
        <authorList>
            <person name="Kobayashi T."/>
            <person name="Antar A.A."/>
            <person name="Boehme K.W."/>
            <person name="Danthi P."/>
            <person name="Eby E.A."/>
            <person name="Guglielmi K.M."/>
            <person name="Holm G.H."/>
            <person name="Johnson E.M."/>
            <person name="Maginnis M.S."/>
            <person name="Naik S."/>
            <person name="Skelton W.B."/>
            <person name="Wetzel J.D."/>
            <person name="Wilson G.J."/>
            <person name="Chappell J.D."/>
            <person name="Dermody T.S."/>
        </authorList>
    </citation>
    <scope>NUCLEOTIDE SEQUENCE [GENOMIC RNA]</scope>
    <source>
        <strain>Infectious clone</strain>
    </source>
</reference>
<reference key="5">
    <citation type="journal article" date="2017" name="J. Virol.">
        <title>Mammalian Orthoreovirus Factories Modulate Stress Granule Protein Localization by Interaction with G3BP1.</title>
        <authorList>
            <person name="Choudhury P."/>
            <person name="Bussiere L.D."/>
            <person name="Miller C.L."/>
        </authorList>
    </citation>
    <scope>SUBCELLULAR LOCATION</scope>
</reference>
<reference key="6">
    <citation type="journal article" date="2021" name="MBio">
        <title>Reovirus Nonstructural Protein sigmaNS Recruits Viral RNA to Replication Organelles.</title>
        <authorList>
            <person name="Lee C.H."/>
            <person name="Raghunathan K."/>
            <person name="Taylor G.M."/>
            <person name="French A.J."/>
            <person name="Tenorio R."/>
            <person name="Fernandez de Castro I."/>
            <person name="Risco C."/>
            <person name="Parker J.S.L."/>
            <person name="Dermody T.S."/>
        </authorList>
    </citation>
    <scope>FUNCTION</scope>
    <scope>RNA-BINDING</scope>
</reference>
<gene>
    <name type="primary">M3</name>
</gene>
<organismHost>
    <name type="scientific">Mammalia</name>
    <dbReference type="NCBI Taxonomy" id="40674"/>
</organismHost>
<proteinExistence type="evidence at protein level"/>
<accession>P12419</accession>
<accession>A4ZY25</accession>
<accession>Q9PY81</accession>
<sequence length="721" mass="80158">MASFKGFSANTVPVSKAKRDISSLAATPGLRSQSFTPSVDMSQSREFLTKAIEQGSMSIPYQHVNVPKVDRKVVSLVVRPFSSGAFSISGVISPAHAYLLECLPQLEQAMAFVASPESFQASDVAKRFAIKPGMSLQDAITAFINFVSAMLKMTVTRQNFDVIVAEIERLASTSVSVRTEEAKVADEELMLFGLDHRGPQLVDVSDAKGIMKAADIQTTHDVHLAPGVGNIDPEIYNEGRFMFMQHKPLAADQSYFTLETADYFKIYPTYDEHDGRMADQKQSGLILCTKDEVLAEQTIFKLDAPDDKTVHLLDRDDDHVVARFTKVFIEDVAPGHHAAQRSGQRSVLDDLYANTQVISITSAALKWVVKHGVSDGIVNRKNVKVCVGFDPLYTLSTHNGVSLCALLMDEKLSVLNSACRMTLRSLMKTGRDVDAHRAFQRVLSQGYTSLMCYYHPSRKLAYGEVLFLERSNDVTDGIKLQLDASRQCHECPVLQQKVVELEKQIIMQKSIQSDPTPVALQPLLSQLRELSSEVTRLQMELSRAQSLNAQLEADVKSAQSCSLDMYLRHHTCINGHAKEDELLDAVRVAPDVRREIMEKRSEVRQGWCERISKEAAAKCQTVIDDLTLMNGKQAQEITELRDSAEKYEKQIAELVSTITQNQITYQQELQALVAKNVELDALNQRQAKSLRITPSLLSATPIDSVDDVADLIDFSVPTDEL</sequence>
<protein>
    <recommendedName>
        <fullName>Protein mu-NS</fullName>
        <shortName>MuNS</shortName>
    </recommendedName>
</protein>